<comment type="function">
    <text evidence="1">Catalyzes the dehydration of inosose (2-keto-myo-inositol, 2KMI or 2,4,6/3,5-pentahydroxycyclohexanone) to 3D-(3,5/4)-trihydroxycyclohexane-1,2-dione (D-2,3-diketo-4-deoxy-epi-inositol).</text>
</comment>
<comment type="catalytic activity">
    <reaction evidence="1">
        <text>scyllo-inosose = 3D-3,5/4-trihydroxycyclohexane-1,2-dione + H2O</text>
        <dbReference type="Rhea" id="RHEA:14065"/>
        <dbReference type="ChEBI" id="CHEBI:15377"/>
        <dbReference type="ChEBI" id="CHEBI:17811"/>
        <dbReference type="ChEBI" id="CHEBI:28446"/>
        <dbReference type="EC" id="4.2.1.44"/>
    </reaction>
</comment>
<comment type="cofactor">
    <cofactor evidence="1">
        <name>glutathione</name>
        <dbReference type="ChEBI" id="CHEBI:57925"/>
    </cofactor>
</comment>
<comment type="cofactor">
    <cofactor evidence="1">
        <name>Co(2+)</name>
        <dbReference type="ChEBI" id="CHEBI:48828"/>
    </cofactor>
    <cofactor evidence="1">
        <name>Mn(2+)</name>
        <dbReference type="ChEBI" id="CHEBI:29035"/>
    </cofactor>
</comment>
<comment type="similarity">
    <text evidence="1">Belongs to the IolE/MocC family.</text>
</comment>
<feature type="chain" id="PRO_1000187328" description="Inosose dehydratase">
    <location>
        <begin position="1"/>
        <end position="301"/>
    </location>
</feature>
<evidence type="ECO:0000255" key="1">
    <source>
        <dbReference type="HAMAP-Rule" id="MF_01672"/>
    </source>
</evidence>
<accession>B5F3F3</accession>
<sequence length="301" mass="33876">MYNVKKSIKLGIAPIGWRNDDIPEIGKENTYKQILSDAALTGFSGTEVGGCYPQDPAELNKELMLRGLEIPGQWFSSFIIRDGIASAMNAFEQHCAYLQAIHAYVAVVSEQTYSIQGIIDKCVYTEKPNFSDSEWQLLCEGLNALGKIANAHGLKLAFHHHMGTGVQTLPEVDRLMENTDPQFVHLLFDTGHIYVSDGDVMPLLSKHFDRIKHVHFKDVRNEKLKACRLAKKSFLNSFLDGVFTVPGDGNIDFKSVLAYLVGHQYSGWIVVEAEQDPKKYNPLEYAQKGKKHIDELLKNYL</sequence>
<gene>
    <name evidence="1" type="primary">iolE</name>
    <name type="ordered locus">SeAg_B4706</name>
</gene>
<reference key="1">
    <citation type="journal article" date="2011" name="J. Bacteriol.">
        <title>Comparative genomics of 28 Salmonella enterica isolates: evidence for CRISPR-mediated adaptive sublineage evolution.</title>
        <authorList>
            <person name="Fricke W.F."/>
            <person name="Mammel M.K."/>
            <person name="McDermott P.F."/>
            <person name="Tartera C."/>
            <person name="White D.G."/>
            <person name="Leclerc J.E."/>
            <person name="Ravel J."/>
            <person name="Cebula T.A."/>
        </authorList>
    </citation>
    <scope>NUCLEOTIDE SEQUENCE [LARGE SCALE GENOMIC DNA]</scope>
    <source>
        <strain>SL483</strain>
    </source>
</reference>
<dbReference type="EC" id="4.2.1.44" evidence="1"/>
<dbReference type="EMBL" id="CP001138">
    <property type="protein sequence ID" value="ACH49354.1"/>
    <property type="molecule type" value="Genomic_DNA"/>
</dbReference>
<dbReference type="SMR" id="B5F3F3"/>
<dbReference type="KEGG" id="sea:SeAg_B4706"/>
<dbReference type="HOGENOM" id="CLU_059523_0_0_6"/>
<dbReference type="Proteomes" id="UP000008819">
    <property type="component" value="Chromosome"/>
</dbReference>
<dbReference type="GO" id="GO:0030145">
    <property type="term" value="F:manganese ion binding"/>
    <property type="evidence" value="ECO:0007669"/>
    <property type="project" value="UniProtKB-UniRule"/>
</dbReference>
<dbReference type="GO" id="GO:0050114">
    <property type="term" value="F:myo-inosose-2 dehydratase activity"/>
    <property type="evidence" value="ECO:0007669"/>
    <property type="project" value="UniProtKB-UniRule"/>
</dbReference>
<dbReference type="GO" id="GO:0019310">
    <property type="term" value="P:inositol catabolic process"/>
    <property type="evidence" value="ECO:0007669"/>
    <property type="project" value="UniProtKB-UniRule"/>
</dbReference>
<dbReference type="Gene3D" id="3.20.20.150">
    <property type="entry name" value="Divalent-metal-dependent TIM barrel enzymes"/>
    <property type="match status" value="1"/>
</dbReference>
<dbReference type="HAMAP" id="MF_01672">
    <property type="entry name" value="IolE"/>
    <property type="match status" value="1"/>
</dbReference>
<dbReference type="InterPro" id="IPR023952">
    <property type="entry name" value="IolE"/>
</dbReference>
<dbReference type="InterPro" id="IPR030823">
    <property type="entry name" value="IolE/MocC"/>
</dbReference>
<dbReference type="InterPro" id="IPR050312">
    <property type="entry name" value="IolE/XylAMocC-like"/>
</dbReference>
<dbReference type="InterPro" id="IPR036237">
    <property type="entry name" value="Xyl_isomerase-like_sf"/>
</dbReference>
<dbReference type="InterPro" id="IPR013022">
    <property type="entry name" value="Xyl_isomerase-like_TIM-brl"/>
</dbReference>
<dbReference type="NCBIfam" id="TIGR04379">
    <property type="entry name" value="myo_inos_iolE"/>
    <property type="match status" value="1"/>
</dbReference>
<dbReference type="PANTHER" id="PTHR12110">
    <property type="entry name" value="HYDROXYPYRUVATE ISOMERASE"/>
    <property type="match status" value="1"/>
</dbReference>
<dbReference type="PANTHER" id="PTHR12110:SF41">
    <property type="entry name" value="INOSOSE DEHYDRATASE"/>
    <property type="match status" value="1"/>
</dbReference>
<dbReference type="Pfam" id="PF01261">
    <property type="entry name" value="AP_endonuc_2"/>
    <property type="match status" value="1"/>
</dbReference>
<dbReference type="SUPFAM" id="SSF51658">
    <property type="entry name" value="Xylose isomerase-like"/>
    <property type="match status" value="1"/>
</dbReference>
<organism>
    <name type="scientific">Salmonella agona (strain SL483)</name>
    <dbReference type="NCBI Taxonomy" id="454166"/>
    <lineage>
        <taxon>Bacteria</taxon>
        <taxon>Pseudomonadati</taxon>
        <taxon>Pseudomonadota</taxon>
        <taxon>Gammaproteobacteria</taxon>
        <taxon>Enterobacterales</taxon>
        <taxon>Enterobacteriaceae</taxon>
        <taxon>Salmonella</taxon>
    </lineage>
</organism>
<protein>
    <recommendedName>
        <fullName evidence="1">Inosose dehydratase</fullName>
        <ecNumber evidence="1">4.2.1.44</ecNumber>
    </recommendedName>
    <alternativeName>
        <fullName evidence="1">2-keto-myo-inositol dehydratase</fullName>
        <shortName evidence="1">2KMI dehydratase</shortName>
    </alternativeName>
</protein>
<proteinExistence type="inferred from homology"/>
<keyword id="KW-0170">Cobalt</keyword>
<keyword id="KW-0456">Lyase</keyword>
<keyword id="KW-0464">Manganese</keyword>
<name>IOLE_SALA4</name>